<comment type="function">
    <text evidence="1">Responsible for the low-affinity transport of potassium into the cell. Likely operates as a K(+):H(+) symporter.</text>
</comment>
<comment type="catalytic activity">
    <reaction evidence="1">
        <text>K(+)(in) + H(+)(in) = K(+)(out) + H(+)(out)</text>
        <dbReference type="Rhea" id="RHEA:28490"/>
        <dbReference type="ChEBI" id="CHEBI:15378"/>
        <dbReference type="ChEBI" id="CHEBI:29103"/>
    </reaction>
    <physiologicalReaction direction="right-to-left" evidence="1">
        <dbReference type="Rhea" id="RHEA:28492"/>
    </physiologicalReaction>
</comment>
<comment type="subcellular location">
    <subcellularLocation>
        <location evidence="1">Cell inner membrane</location>
        <topology evidence="1">Multi-pass membrane protein</topology>
    </subcellularLocation>
</comment>
<comment type="similarity">
    <text evidence="1">Belongs to the HAK/KUP transporter (TC 2.A.72) family.</text>
</comment>
<dbReference type="EMBL" id="CP001113">
    <property type="protein sequence ID" value="ACF65047.1"/>
    <property type="molecule type" value="Genomic_DNA"/>
</dbReference>
<dbReference type="RefSeq" id="WP_000102338.1">
    <property type="nucleotide sequence ID" value="NZ_CCMR01000001.1"/>
</dbReference>
<dbReference type="KEGG" id="see:SNSL254_A4163"/>
<dbReference type="HOGENOM" id="CLU_008142_4_2_6"/>
<dbReference type="Proteomes" id="UP000008824">
    <property type="component" value="Chromosome"/>
</dbReference>
<dbReference type="GO" id="GO:0005886">
    <property type="term" value="C:plasma membrane"/>
    <property type="evidence" value="ECO:0007669"/>
    <property type="project" value="UniProtKB-SubCell"/>
</dbReference>
<dbReference type="GO" id="GO:0015079">
    <property type="term" value="F:potassium ion transmembrane transporter activity"/>
    <property type="evidence" value="ECO:0007669"/>
    <property type="project" value="UniProtKB-UniRule"/>
</dbReference>
<dbReference type="GO" id="GO:0015293">
    <property type="term" value="F:symporter activity"/>
    <property type="evidence" value="ECO:0007669"/>
    <property type="project" value="UniProtKB-UniRule"/>
</dbReference>
<dbReference type="HAMAP" id="MF_01522">
    <property type="entry name" value="Kup"/>
    <property type="match status" value="1"/>
</dbReference>
<dbReference type="InterPro" id="IPR003855">
    <property type="entry name" value="K+_transporter"/>
</dbReference>
<dbReference type="InterPro" id="IPR053952">
    <property type="entry name" value="K_trans_C"/>
</dbReference>
<dbReference type="InterPro" id="IPR053951">
    <property type="entry name" value="K_trans_N"/>
</dbReference>
<dbReference type="InterPro" id="IPR023051">
    <property type="entry name" value="Kup"/>
</dbReference>
<dbReference type="NCBIfam" id="TIGR00794">
    <property type="entry name" value="kup"/>
    <property type="match status" value="1"/>
</dbReference>
<dbReference type="NCBIfam" id="NF008015">
    <property type="entry name" value="PRK10745.1"/>
    <property type="match status" value="1"/>
</dbReference>
<dbReference type="PANTHER" id="PTHR30540:SF79">
    <property type="entry name" value="LOW AFFINITY POTASSIUM TRANSPORT SYSTEM PROTEIN KUP"/>
    <property type="match status" value="1"/>
</dbReference>
<dbReference type="PANTHER" id="PTHR30540">
    <property type="entry name" value="OSMOTIC STRESS POTASSIUM TRANSPORTER"/>
    <property type="match status" value="1"/>
</dbReference>
<dbReference type="Pfam" id="PF02705">
    <property type="entry name" value="K_trans"/>
    <property type="match status" value="1"/>
</dbReference>
<dbReference type="Pfam" id="PF22776">
    <property type="entry name" value="K_trans_C"/>
    <property type="match status" value="1"/>
</dbReference>
<feature type="chain" id="PRO_1000190281" description="Low affinity potassium transport system protein Kup">
    <location>
        <begin position="1"/>
        <end position="622"/>
    </location>
</feature>
<feature type="transmembrane region" description="Helical" evidence="1">
    <location>
        <begin position="9"/>
        <end position="29"/>
    </location>
</feature>
<feature type="transmembrane region" description="Helical" evidence="1">
    <location>
        <begin position="49"/>
        <end position="69"/>
    </location>
</feature>
<feature type="transmembrane region" description="Helical" evidence="1">
    <location>
        <begin position="103"/>
        <end position="123"/>
    </location>
</feature>
<feature type="transmembrane region" description="Helical" evidence="1">
    <location>
        <begin position="137"/>
        <end position="157"/>
    </location>
</feature>
<feature type="transmembrane region" description="Helical" evidence="1">
    <location>
        <begin position="165"/>
        <end position="185"/>
    </location>
</feature>
<feature type="transmembrane region" description="Helical" evidence="1">
    <location>
        <begin position="213"/>
        <end position="233"/>
    </location>
</feature>
<feature type="transmembrane region" description="Helical" evidence="1">
    <location>
        <begin position="247"/>
        <end position="267"/>
    </location>
</feature>
<feature type="transmembrane region" description="Helical" evidence="1">
    <location>
        <begin position="276"/>
        <end position="296"/>
    </location>
</feature>
<feature type="transmembrane region" description="Helical" evidence="1">
    <location>
        <begin position="337"/>
        <end position="357"/>
    </location>
</feature>
<feature type="transmembrane region" description="Helical" evidence="1">
    <location>
        <begin position="363"/>
        <end position="383"/>
    </location>
</feature>
<feature type="transmembrane region" description="Helical" evidence="1">
    <location>
        <begin position="396"/>
        <end position="416"/>
    </location>
</feature>
<feature type="transmembrane region" description="Helical" evidence="1">
    <location>
        <begin position="419"/>
        <end position="439"/>
    </location>
</feature>
<keyword id="KW-0997">Cell inner membrane</keyword>
<keyword id="KW-1003">Cell membrane</keyword>
<keyword id="KW-0406">Ion transport</keyword>
<keyword id="KW-0472">Membrane</keyword>
<keyword id="KW-0630">Potassium</keyword>
<keyword id="KW-0633">Potassium transport</keyword>
<keyword id="KW-0769">Symport</keyword>
<keyword id="KW-0812">Transmembrane</keyword>
<keyword id="KW-1133">Transmembrane helix</keyword>
<keyword id="KW-0813">Transport</keyword>
<accession>B4SYE8</accession>
<organism>
    <name type="scientific">Salmonella newport (strain SL254)</name>
    <dbReference type="NCBI Taxonomy" id="423368"/>
    <lineage>
        <taxon>Bacteria</taxon>
        <taxon>Pseudomonadati</taxon>
        <taxon>Pseudomonadota</taxon>
        <taxon>Gammaproteobacteria</taxon>
        <taxon>Enterobacterales</taxon>
        <taxon>Enterobacteriaceae</taxon>
        <taxon>Salmonella</taxon>
    </lineage>
</organism>
<protein>
    <recommendedName>
        <fullName evidence="1">Low affinity potassium transport system protein Kup</fullName>
    </recommendedName>
    <alternativeName>
        <fullName evidence="1">Kup system potassium uptake protein</fullName>
    </alternativeName>
</protein>
<gene>
    <name evidence="1" type="primary">kup</name>
    <name type="ordered locus">SNSL254_A4163</name>
</gene>
<sequence>MSTDNKQSLPAITLAAIGVVYGDIGTSPLYTLRECLSGQFGFGVERDAVFGFLSLIFWLLIFVVSIKYLTFVMRADNAGEGGILTLMSLAGRNTSARTTSMLVIMGLIGGSFFYGEVVITPAISVMSAIEGLEIVAPQLDTWIVPLSIIVLTLLFMIQKHGTGMVGKLFAPIMLTWFLILAVLGLRSIIANPEVLHALNPVWAVRFFLEYKTVSFIALGAVVLSITGVEALYADMGHFGKFPIRLAWFTVVLPSLVLNYFGQGALLLKHPEAIKNPFFLLAPDWALIPLLILAALATVIASQAVISGVFSLTRQAVRLGYLSPMRIIHTSEMESGQIYIPFVNWLLYFAVVVVIVSFEHSSNLAAAYGIAVTGTMVLTSILSTTVARKNWHWNKYFVALILIAFLCVDIPLFSANLDKLLSGGWLPLSLGLIMFTIMTTWKSERFRLLRRMHEHGNSLEAMIASLEKSPPVRVPGTAVYMSRALSVIPFALLHNLKHNKVLHERVILLTLRTEDAPYVHNVRRVQIEQLSPTFWRVVASYGWRETPNVEEVFHRCGLEGLSCRMMETSFFMSHESLIVGKRPWYLRLRGKLYLLLQRNALRAPDQFEIPPNRVIELGTQVEI</sequence>
<reference key="1">
    <citation type="journal article" date="2011" name="J. Bacteriol.">
        <title>Comparative genomics of 28 Salmonella enterica isolates: evidence for CRISPR-mediated adaptive sublineage evolution.</title>
        <authorList>
            <person name="Fricke W.F."/>
            <person name="Mammel M.K."/>
            <person name="McDermott P.F."/>
            <person name="Tartera C."/>
            <person name="White D.G."/>
            <person name="Leclerc J.E."/>
            <person name="Ravel J."/>
            <person name="Cebula T.A."/>
        </authorList>
    </citation>
    <scope>NUCLEOTIDE SEQUENCE [LARGE SCALE GENOMIC DNA]</scope>
    <source>
        <strain>SL254</strain>
    </source>
</reference>
<name>KUP_SALNS</name>
<proteinExistence type="inferred from homology"/>
<evidence type="ECO:0000255" key="1">
    <source>
        <dbReference type="HAMAP-Rule" id="MF_01522"/>
    </source>
</evidence>